<evidence type="ECO:0000305" key="1"/>
<sequence length="407" mass="45066">MKLTFFTMQFPVSSETFVLNQVTHFIDIGYDVEIIAVFPGDLVNRHAAFDRYNLAAKTHYLLPDDKDGKTAKLAQRLAIILPKILKPGTLKSFHIGRYGAQSSKLLLPAIVAANKKPFAADIFLVHFGYAGALANKLRELKVLQGKQVTVFHGADISRRHILEEHKKDYPRLFAQNELLLPISRLWQHKLIAMGCPAEKINVTRMGIEPEKFNLKLRDALHQPLRILSVARLTEKKGLGVAIEACRILKQQGGCFEYTIIGYGDLEAQLKTAIADGDLEDCVKLVGFKPQEEIKRYLDEADIFLLPSLTAADGDMEGIPVALMEAMAVGLPVVSSEHSGIPELIEHNVSGWLAPEGDAQALAAILLRLSQGEADVVPVVLAARAKVETEFNQHIAYRQLAEILERLA</sequence>
<organism>
    <name type="scientific">Erwinia amylovora</name>
    <name type="common">Fire blight bacteria</name>
    <dbReference type="NCBI Taxonomy" id="552"/>
    <lineage>
        <taxon>Bacteria</taxon>
        <taxon>Pseudomonadati</taxon>
        <taxon>Pseudomonadota</taxon>
        <taxon>Gammaproteobacteria</taxon>
        <taxon>Enterobacterales</taxon>
        <taxon>Erwiniaceae</taxon>
        <taxon>Erwinia</taxon>
    </lineage>
</organism>
<feature type="chain" id="PRO_0000080292" description="Amylovoran biosynthesis glycosyltransferase AmsK">
    <location>
        <begin position="1"/>
        <end position="407"/>
    </location>
</feature>
<proteinExistence type="inferred from homology"/>
<comment type="function">
    <text>Involved in the biosynthesis of amylovoran which functions as a virulence factor.</text>
</comment>
<comment type="pathway">
    <text>Glycan metabolism; exopolysaccharide biosynthesis.</text>
</comment>
<comment type="similarity">
    <text evidence="1">Belongs to the glycosyltransferase group 1 family. Glycosyltransferase 4 subfamily.</text>
</comment>
<protein>
    <recommendedName>
        <fullName>Amylovoran biosynthesis glycosyltransferase AmsK</fullName>
        <ecNumber>2.4.-.-</ecNumber>
    </recommendedName>
</protein>
<name>AMSK_ERWAM</name>
<accession>Q46638</accession>
<reference key="1">
    <citation type="journal article" date="1995" name="Mol. Microbiol.">
        <title>Molecular analysis of the ams operon required for exopolysaccharide synthesis of Erwinia amylovora.</title>
        <authorList>
            <person name="Bugert P."/>
            <person name="Geider K."/>
        </authorList>
    </citation>
    <scope>NUCLEOTIDE SEQUENCE [GENOMIC DNA]</scope>
</reference>
<reference key="2">
    <citation type="submission" date="2011-08" db="EMBL/GenBank/DDBJ databases">
        <authorList>
            <person name="Geider K.K."/>
        </authorList>
    </citation>
    <scope>SEQUENCE REVISION TO 277</scope>
</reference>
<gene>
    <name type="primary">amsK</name>
</gene>
<dbReference type="EC" id="2.4.-.-"/>
<dbReference type="EMBL" id="X77921">
    <property type="protein sequence ID" value="CAA54889.2"/>
    <property type="molecule type" value="Genomic_DNA"/>
</dbReference>
<dbReference type="PIR" id="S61901">
    <property type="entry name" value="S52148"/>
</dbReference>
<dbReference type="RefSeq" id="WP_004158313.1">
    <property type="nucleotide sequence ID" value="NZ_RQKG01000006.1"/>
</dbReference>
<dbReference type="SMR" id="Q46638"/>
<dbReference type="CAZy" id="GT4">
    <property type="family name" value="Glycosyltransferase Family 4"/>
</dbReference>
<dbReference type="OMA" id="EMAGWNS"/>
<dbReference type="UniPathway" id="UPA00631"/>
<dbReference type="GO" id="GO:0016757">
    <property type="term" value="F:glycosyltransferase activity"/>
    <property type="evidence" value="ECO:0007669"/>
    <property type="project" value="UniProtKB-KW"/>
</dbReference>
<dbReference type="GO" id="GO:1901135">
    <property type="term" value="P:carbohydrate derivative metabolic process"/>
    <property type="evidence" value="ECO:0007669"/>
    <property type="project" value="UniProtKB-ARBA"/>
</dbReference>
<dbReference type="GO" id="GO:0000271">
    <property type="term" value="P:polysaccharide biosynthetic process"/>
    <property type="evidence" value="ECO:0007669"/>
    <property type="project" value="UniProtKB-KW"/>
</dbReference>
<dbReference type="Gene3D" id="3.40.50.2000">
    <property type="entry name" value="Glycogen Phosphorylase B"/>
    <property type="match status" value="2"/>
</dbReference>
<dbReference type="InterPro" id="IPR001296">
    <property type="entry name" value="Glyco_trans_1"/>
</dbReference>
<dbReference type="PANTHER" id="PTHR12526:SF640">
    <property type="entry name" value="COLANIC ACID BIOSYNTHESIS GLYCOSYLTRANSFERASE WCAL-RELATED"/>
    <property type="match status" value="1"/>
</dbReference>
<dbReference type="PANTHER" id="PTHR12526">
    <property type="entry name" value="GLYCOSYLTRANSFERASE"/>
    <property type="match status" value="1"/>
</dbReference>
<dbReference type="Pfam" id="PF00534">
    <property type="entry name" value="Glycos_transf_1"/>
    <property type="match status" value="1"/>
</dbReference>
<dbReference type="SUPFAM" id="SSF53756">
    <property type="entry name" value="UDP-Glycosyltransferase/glycogen phosphorylase"/>
    <property type="match status" value="1"/>
</dbReference>
<keyword id="KW-0270">Exopolysaccharide synthesis</keyword>
<keyword id="KW-0328">Glycosyltransferase</keyword>
<keyword id="KW-0808">Transferase</keyword>
<keyword id="KW-0843">Virulence</keyword>